<dbReference type="EC" id="3.11.1.1" evidence="1"/>
<dbReference type="EMBL" id="CP001113">
    <property type="protein sequence ID" value="ACF65556.1"/>
    <property type="molecule type" value="Genomic_DNA"/>
</dbReference>
<dbReference type="RefSeq" id="WP_001530701.1">
    <property type="nucleotide sequence ID" value="NZ_CCMR01000003.1"/>
</dbReference>
<dbReference type="SMR" id="B4SWS4"/>
<dbReference type="KEGG" id="see:SNSL254_A0479"/>
<dbReference type="HOGENOM" id="CLU_045011_12_0_6"/>
<dbReference type="Proteomes" id="UP000008824">
    <property type="component" value="Chromosome"/>
</dbReference>
<dbReference type="GO" id="GO:0005829">
    <property type="term" value="C:cytosol"/>
    <property type="evidence" value="ECO:0007669"/>
    <property type="project" value="TreeGrafter"/>
</dbReference>
<dbReference type="GO" id="GO:0000287">
    <property type="term" value="F:magnesium ion binding"/>
    <property type="evidence" value="ECO:0007669"/>
    <property type="project" value="UniProtKB-UniRule"/>
</dbReference>
<dbReference type="GO" id="GO:0008967">
    <property type="term" value="F:phosphoglycolate phosphatase activity"/>
    <property type="evidence" value="ECO:0007669"/>
    <property type="project" value="TreeGrafter"/>
</dbReference>
<dbReference type="GO" id="GO:0050194">
    <property type="term" value="F:phosphonoacetaldehyde hydrolase activity"/>
    <property type="evidence" value="ECO:0007669"/>
    <property type="project" value="UniProtKB-UniRule"/>
</dbReference>
<dbReference type="GO" id="GO:0006281">
    <property type="term" value="P:DNA repair"/>
    <property type="evidence" value="ECO:0007669"/>
    <property type="project" value="TreeGrafter"/>
</dbReference>
<dbReference type="GO" id="GO:0019700">
    <property type="term" value="P:organic phosphonate catabolic process"/>
    <property type="evidence" value="ECO:0007669"/>
    <property type="project" value="InterPro"/>
</dbReference>
<dbReference type="CDD" id="cd02586">
    <property type="entry name" value="HAD_PHN"/>
    <property type="match status" value="1"/>
</dbReference>
<dbReference type="FunFam" id="1.10.150.240:FF:000006">
    <property type="entry name" value="Phosphonoacetaldehyde hydrolase"/>
    <property type="match status" value="1"/>
</dbReference>
<dbReference type="FunFam" id="3.40.50.1000:FF:000072">
    <property type="entry name" value="Phosphonoacetaldehyde hydrolase"/>
    <property type="match status" value="1"/>
</dbReference>
<dbReference type="Gene3D" id="3.40.50.1000">
    <property type="entry name" value="HAD superfamily/HAD-like"/>
    <property type="match status" value="1"/>
</dbReference>
<dbReference type="Gene3D" id="1.10.150.240">
    <property type="entry name" value="Putative phosphatase, domain 2"/>
    <property type="match status" value="1"/>
</dbReference>
<dbReference type="HAMAP" id="MF_01375">
    <property type="entry name" value="PhnX"/>
    <property type="match status" value="1"/>
</dbReference>
<dbReference type="InterPro" id="IPR050155">
    <property type="entry name" value="HAD-like_hydrolase_sf"/>
</dbReference>
<dbReference type="InterPro" id="IPR036412">
    <property type="entry name" value="HAD-like_sf"/>
</dbReference>
<dbReference type="InterPro" id="IPR006439">
    <property type="entry name" value="HAD-SF_hydro_IA"/>
</dbReference>
<dbReference type="InterPro" id="IPR023214">
    <property type="entry name" value="HAD_sf"/>
</dbReference>
<dbReference type="InterPro" id="IPR023198">
    <property type="entry name" value="PGP-like_dom2"/>
</dbReference>
<dbReference type="InterPro" id="IPR006323">
    <property type="entry name" value="Phosphonoacetald_hydro"/>
</dbReference>
<dbReference type="NCBIfam" id="TIGR01509">
    <property type="entry name" value="HAD-SF-IA-v3"/>
    <property type="match status" value="1"/>
</dbReference>
<dbReference type="NCBIfam" id="TIGR01422">
    <property type="entry name" value="phosphonatase"/>
    <property type="match status" value="1"/>
</dbReference>
<dbReference type="PANTHER" id="PTHR43434">
    <property type="entry name" value="PHOSPHOGLYCOLATE PHOSPHATASE"/>
    <property type="match status" value="1"/>
</dbReference>
<dbReference type="PANTHER" id="PTHR43434:SF19">
    <property type="entry name" value="PHOSPHONOACETALDEHYDE HYDROLASE"/>
    <property type="match status" value="1"/>
</dbReference>
<dbReference type="Pfam" id="PF00702">
    <property type="entry name" value="Hydrolase"/>
    <property type="match status" value="1"/>
</dbReference>
<dbReference type="SFLD" id="SFLDG01129">
    <property type="entry name" value="C1.5:_HAD__Beta-PGM__Phosphata"/>
    <property type="match status" value="1"/>
</dbReference>
<dbReference type="SFLD" id="SFLDF00038">
    <property type="entry name" value="phosphonoacetaldehyde_hydrolas"/>
    <property type="match status" value="1"/>
</dbReference>
<dbReference type="SUPFAM" id="SSF56784">
    <property type="entry name" value="HAD-like"/>
    <property type="match status" value="1"/>
</dbReference>
<gene>
    <name evidence="1" type="primary">phnX</name>
    <name type="ordered locus">SNSL254_A0479</name>
</gene>
<reference key="1">
    <citation type="journal article" date="2011" name="J. Bacteriol.">
        <title>Comparative genomics of 28 Salmonella enterica isolates: evidence for CRISPR-mediated adaptive sublineage evolution.</title>
        <authorList>
            <person name="Fricke W.F."/>
            <person name="Mammel M.K."/>
            <person name="McDermott P.F."/>
            <person name="Tartera C."/>
            <person name="White D.G."/>
            <person name="Leclerc J.E."/>
            <person name="Ravel J."/>
            <person name="Cebula T.A."/>
        </authorList>
    </citation>
    <scope>NUCLEOTIDE SEQUENCE [LARGE SCALE GENOMIC DNA]</scope>
    <source>
        <strain>SL254</strain>
    </source>
</reference>
<name>PHNX_SALNS</name>
<evidence type="ECO:0000255" key="1">
    <source>
        <dbReference type="HAMAP-Rule" id="MF_01375"/>
    </source>
</evidence>
<keyword id="KW-0378">Hydrolase</keyword>
<keyword id="KW-0460">Magnesium</keyword>
<keyword id="KW-0479">Metal-binding</keyword>
<keyword id="KW-0704">Schiff base</keyword>
<proteinExistence type="inferred from homology"/>
<protein>
    <recommendedName>
        <fullName evidence="1">Phosphonoacetaldehyde hydrolase</fullName>
        <shortName evidence="1">Phosphonatase</shortName>
        <ecNumber evidence="1">3.11.1.1</ecNumber>
    </recommendedName>
    <alternativeName>
        <fullName evidence="1">Phosphonoacetaldehyde phosphonohydrolase</fullName>
    </alternativeName>
</protein>
<comment type="function">
    <text evidence="1">Involved in phosphonate degradation.</text>
</comment>
<comment type="catalytic activity">
    <reaction evidence="1">
        <text>phosphonoacetaldehyde + H2O = acetaldehyde + phosphate + H(+)</text>
        <dbReference type="Rhea" id="RHEA:18905"/>
        <dbReference type="ChEBI" id="CHEBI:15343"/>
        <dbReference type="ChEBI" id="CHEBI:15377"/>
        <dbReference type="ChEBI" id="CHEBI:15378"/>
        <dbReference type="ChEBI" id="CHEBI:43474"/>
        <dbReference type="ChEBI" id="CHEBI:58383"/>
        <dbReference type="EC" id="3.11.1.1"/>
    </reaction>
</comment>
<comment type="cofactor">
    <cofactor evidence="1">
        <name>Mg(2+)</name>
        <dbReference type="ChEBI" id="CHEBI:18420"/>
    </cofactor>
    <text evidence="1">Binds 1 Mg(2+) ion per subunit.</text>
</comment>
<comment type="subunit">
    <text evidence="1">Homodimer.</text>
</comment>
<comment type="similarity">
    <text evidence="1">Belongs to the HAD-like hydrolase superfamily. PhnX family.</text>
</comment>
<organism>
    <name type="scientific">Salmonella newport (strain SL254)</name>
    <dbReference type="NCBI Taxonomy" id="423368"/>
    <lineage>
        <taxon>Bacteria</taxon>
        <taxon>Pseudomonadati</taxon>
        <taxon>Pseudomonadota</taxon>
        <taxon>Gammaproteobacteria</taxon>
        <taxon>Enterobacterales</taxon>
        <taxon>Enterobacteriaceae</taxon>
        <taxon>Salmonella</taxon>
    </lineage>
</organism>
<sequence length="269" mass="28646">MNRIHAVILDWAGTTVDFGSFAPTQIFVEAFRQAFDVEITLAEARVPMGLGKWQHIEALGKLPAVDARWQAKFGRSMSAADIDAIYAAFMPLQIAKVVDFSSPIAGVIDTIAALRAEGIKIGSCSGYPRAVMERLVPAAAEHGYRPDHWVATDDLAAGGRPGPWMALQNVIALGIDAVAHCVKVDDAAPGISEGLNAGMWTVGLAVSGNEFGATWDAYQTMSKEDVAVRREHAASKLYAAGAHYVVDSLADLPGVIAHINARLAQGERP</sequence>
<accession>B4SWS4</accession>
<feature type="chain" id="PRO_1000144841" description="Phosphonoacetaldehyde hydrolase">
    <location>
        <begin position="1"/>
        <end position="269"/>
    </location>
</feature>
<feature type="active site" description="Nucleophile" evidence="1">
    <location>
        <position position="10"/>
    </location>
</feature>
<feature type="active site" description="Schiff-base intermediate with substrate" evidence="1">
    <location>
        <position position="52"/>
    </location>
</feature>
<feature type="binding site" evidence="1">
    <location>
        <position position="10"/>
    </location>
    <ligand>
        <name>Mg(2+)</name>
        <dbReference type="ChEBI" id="CHEBI:18420"/>
    </ligand>
</feature>
<feature type="binding site" evidence="1">
    <location>
        <position position="12"/>
    </location>
    <ligand>
        <name>Mg(2+)</name>
        <dbReference type="ChEBI" id="CHEBI:18420"/>
    </ligand>
</feature>
<feature type="binding site" evidence="1">
    <location>
        <position position="186"/>
    </location>
    <ligand>
        <name>Mg(2+)</name>
        <dbReference type="ChEBI" id="CHEBI:18420"/>
    </ligand>
</feature>